<evidence type="ECO:0000250" key="1">
    <source>
        <dbReference type="UniProtKB" id="P28523"/>
    </source>
</evidence>
<evidence type="ECO:0000250" key="2">
    <source>
        <dbReference type="UniProtKB" id="Q869N2"/>
    </source>
</evidence>
<evidence type="ECO:0000255" key="3">
    <source>
        <dbReference type="PROSITE-ProRule" id="PRU00159"/>
    </source>
</evidence>
<evidence type="ECO:0000255" key="4">
    <source>
        <dbReference type="PROSITE-ProRule" id="PRU00192"/>
    </source>
</evidence>
<evidence type="ECO:0000255" key="5">
    <source>
        <dbReference type="PROSITE-ProRule" id="PRU10027"/>
    </source>
</evidence>
<evidence type="ECO:0000256" key="6">
    <source>
        <dbReference type="SAM" id="MobiDB-lite"/>
    </source>
</evidence>
<evidence type="ECO:0000312" key="7">
    <source>
        <dbReference type="EMBL" id="EAL72401.1"/>
    </source>
</evidence>
<sequence>MLYLVATGDYKGPSENHLSFTKGQRIEFLERTENGFIKGKLDGKVGIFPSSLITIETRPLSIIQNQPIKYSTETKDDTGSISSSTSTSTSSLTTPRAESSKDASGEQQPSTSTINGQSSSTSPILQSNGTTNTTTSSTSNNNIGDNISEKSFGDYDDTTSNHSKSASRLSVASFSTTTTATTTTTTTTTATSSKDKDKKDKKEKKEKKDKKSKDDDKSEKEGLYRKSKGSSSSSSSSSSSTKRRYANRKACEPWVVKKYEDIPEEVKSDMLKEDIPIKDIQDHFKLFLRILKFITRQKITLLIPIDPTIPTKEMNLLDLSDAESVAKSTTMFTREEIRTSAFDNVDAFVDAPIMDDNEKAAKTTEIKLERKRILTGISTEFLGQASTTIRVIPSSDIKKRIKFTHMVGRGQYGKVYDALYDKKRVCVKVVNYSTPKEQHNVLQEIGFLTQCDHPNILKYNCSVLYGSDLFIVSEFIQGGTLEQASASSHVFKETQVGFIGLELLKAISYLHEKKLIHRDIKAANVMVSTDGEVKLIDFGLCASVEKGGSQHMVGSPYYMSPEMIRGEECSYPSDIWSFGICILELLFKKPPHRDSRMKAMFYNAINGIDFPKIRCSIDLKDMLWQCFESNPEKRSTVDKLMRHPFFKRCESKSQMKSVFTDMFSTSSKNSISTTGFF</sequence>
<name>MKCF_DICDI</name>
<reference evidence="7" key="1">
    <citation type="journal article" date="2005" name="Nature">
        <title>The genome of the social amoeba Dictyostelium discoideum.</title>
        <authorList>
            <person name="Eichinger L."/>
            <person name="Pachebat J.A."/>
            <person name="Gloeckner G."/>
            <person name="Rajandream M.A."/>
            <person name="Sucgang R."/>
            <person name="Berriman M."/>
            <person name="Song J."/>
            <person name="Olsen R."/>
            <person name="Szafranski K."/>
            <person name="Xu Q."/>
            <person name="Tunggal B."/>
            <person name="Kummerfeld S."/>
            <person name="Madera M."/>
            <person name="Konfortov B.A."/>
            <person name="Rivero F."/>
            <person name="Bankier A.T."/>
            <person name="Lehmann R."/>
            <person name="Hamlin N."/>
            <person name="Davies R."/>
            <person name="Gaudet P."/>
            <person name="Fey P."/>
            <person name="Pilcher K."/>
            <person name="Chen G."/>
            <person name="Saunders D."/>
            <person name="Sodergren E.J."/>
            <person name="Davis P."/>
            <person name="Kerhornou A."/>
            <person name="Nie X."/>
            <person name="Hall N."/>
            <person name="Anjard C."/>
            <person name="Hemphill L."/>
            <person name="Bason N."/>
            <person name="Farbrother P."/>
            <person name="Desany B."/>
            <person name="Just E."/>
            <person name="Morio T."/>
            <person name="Rost R."/>
            <person name="Churcher C.M."/>
            <person name="Cooper J."/>
            <person name="Haydock S."/>
            <person name="van Driessche N."/>
            <person name="Cronin A."/>
            <person name="Goodhead I."/>
            <person name="Muzny D.M."/>
            <person name="Mourier T."/>
            <person name="Pain A."/>
            <person name="Lu M."/>
            <person name="Harper D."/>
            <person name="Lindsay R."/>
            <person name="Hauser H."/>
            <person name="James K.D."/>
            <person name="Quiles M."/>
            <person name="Madan Babu M."/>
            <person name="Saito T."/>
            <person name="Buchrieser C."/>
            <person name="Wardroper A."/>
            <person name="Felder M."/>
            <person name="Thangavelu M."/>
            <person name="Johnson D."/>
            <person name="Knights A."/>
            <person name="Loulseged H."/>
            <person name="Mungall K.L."/>
            <person name="Oliver K."/>
            <person name="Price C."/>
            <person name="Quail M.A."/>
            <person name="Urushihara H."/>
            <person name="Hernandez J."/>
            <person name="Rabbinowitsch E."/>
            <person name="Steffen D."/>
            <person name="Sanders M."/>
            <person name="Ma J."/>
            <person name="Kohara Y."/>
            <person name="Sharp S."/>
            <person name="Simmonds M.N."/>
            <person name="Spiegler S."/>
            <person name="Tivey A."/>
            <person name="Sugano S."/>
            <person name="White B."/>
            <person name="Walker D."/>
            <person name="Woodward J.R."/>
            <person name="Winckler T."/>
            <person name="Tanaka Y."/>
            <person name="Shaulsky G."/>
            <person name="Schleicher M."/>
            <person name="Weinstock G.M."/>
            <person name="Rosenthal A."/>
            <person name="Cox E.C."/>
            <person name="Chisholm R.L."/>
            <person name="Gibbs R.A."/>
            <person name="Loomis W.F."/>
            <person name="Platzer M."/>
            <person name="Kay R.R."/>
            <person name="Williams J.G."/>
            <person name="Dear P.H."/>
            <person name="Noegel A.A."/>
            <person name="Barrell B.G."/>
            <person name="Kuspa A."/>
        </authorList>
    </citation>
    <scope>NUCLEOTIDE SEQUENCE [LARGE SCALE GENOMIC DNA]</scope>
    <source>
        <strain evidence="7">AX4</strain>
    </source>
</reference>
<gene>
    <name evidence="7" type="primary">mkcF</name>
    <name type="ORF">DDB_G0270102</name>
</gene>
<organism>
    <name type="scientific">Dictyostelium discoideum</name>
    <name type="common">Social amoeba</name>
    <dbReference type="NCBI Taxonomy" id="44689"/>
    <lineage>
        <taxon>Eukaryota</taxon>
        <taxon>Amoebozoa</taxon>
        <taxon>Evosea</taxon>
        <taxon>Eumycetozoa</taxon>
        <taxon>Dictyostelia</taxon>
        <taxon>Dictyosteliales</taxon>
        <taxon>Dictyosteliaceae</taxon>
        <taxon>Dictyostelium</taxon>
    </lineage>
</organism>
<dbReference type="EC" id="2.7.11.1"/>
<dbReference type="EMBL" id="AAFI02000005">
    <property type="protein sequence ID" value="EAL72401.1"/>
    <property type="molecule type" value="Genomic_DNA"/>
</dbReference>
<dbReference type="RefSeq" id="XP_646541.1">
    <property type="nucleotide sequence ID" value="XM_641449.1"/>
</dbReference>
<dbReference type="SMR" id="Q55CE0"/>
<dbReference type="PaxDb" id="44689-DDB0229970"/>
<dbReference type="EnsemblProtists" id="EAL72401">
    <property type="protein sequence ID" value="EAL72401"/>
    <property type="gene ID" value="DDB_G0270102"/>
</dbReference>
<dbReference type="GeneID" id="8617507"/>
<dbReference type="KEGG" id="ddi:DDB_G0270102"/>
<dbReference type="dictyBase" id="DDB_G0270102">
    <property type="gene designation" value="mkcF"/>
</dbReference>
<dbReference type="VEuPathDB" id="AmoebaDB:DDB_G0270102"/>
<dbReference type="eggNOG" id="KOG0578">
    <property type="taxonomic scope" value="Eukaryota"/>
</dbReference>
<dbReference type="HOGENOM" id="CLU_406240_0_0_1"/>
<dbReference type="InParanoid" id="Q55CE0"/>
<dbReference type="OMA" id="DMLWQCF"/>
<dbReference type="PhylomeDB" id="Q55CE0"/>
<dbReference type="Reactome" id="R-DDI-383280">
    <property type="pathway name" value="Nuclear Receptor transcription pathway"/>
</dbReference>
<dbReference type="PRO" id="PR:Q55CE0"/>
<dbReference type="Proteomes" id="UP000002195">
    <property type="component" value="Chromosome 1"/>
</dbReference>
<dbReference type="GO" id="GO:0005737">
    <property type="term" value="C:cytoplasm"/>
    <property type="evidence" value="ECO:0000318"/>
    <property type="project" value="GO_Central"/>
</dbReference>
<dbReference type="GO" id="GO:0005524">
    <property type="term" value="F:ATP binding"/>
    <property type="evidence" value="ECO:0007669"/>
    <property type="project" value="UniProtKB-KW"/>
</dbReference>
<dbReference type="GO" id="GO:0046872">
    <property type="term" value="F:metal ion binding"/>
    <property type="evidence" value="ECO:0007669"/>
    <property type="project" value="UniProtKB-KW"/>
</dbReference>
<dbReference type="GO" id="GO:0106310">
    <property type="term" value="F:protein serine kinase activity"/>
    <property type="evidence" value="ECO:0007669"/>
    <property type="project" value="RHEA"/>
</dbReference>
<dbReference type="GO" id="GO:0004674">
    <property type="term" value="F:protein serine/threonine kinase activity"/>
    <property type="evidence" value="ECO:0000318"/>
    <property type="project" value="GO_Central"/>
</dbReference>
<dbReference type="GO" id="GO:0022607">
    <property type="term" value="P:cellular component assembly"/>
    <property type="evidence" value="ECO:0007669"/>
    <property type="project" value="UniProtKB-ARBA"/>
</dbReference>
<dbReference type="CDD" id="cd05122">
    <property type="entry name" value="PKc_STE"/>
    <property type="match status" value="1"/>
</dbReference>
<dbReference type="CDD" id="cd00174">
    <property type="entry name" value="SH3"/>
    <property type="match status" value="1"/>
</dbReference>
<dbReference type="FunFam" id="1.10.510.10:FF:001158">
    <property type="entry name" value="Probable serine/threonine-protein kinase mkcE"/>
    <property type="match status" value="1"/>
</dbReference>
<dbReference type="Gene3D" id="2.30.30.40">
    <property type="entry name" value="SH3 Domains"/>
    <property type="match status" value="1"/>
</dbReference>
<dbReference type="Gene3D" id="1.10.510.10">
    <property type="entry name" value="Transferase(Phosphotransferase) domain 1"/>
    <property type="match status" value="1"/>
</dbReference>
<dbReference type="InterPro" id="IPR011009">
    <property type="entry name" value="Kinase-like_dom_sf"/>
</dbReference>
<dbReference type="InterPro" id="IPR000719">
    <property type="entry name" value="Prot_kinase_dom"/>
</dbReference>
<dbReference type="InterPro" id="IPR001245">
    <property type="entry name" value="Ser-Thr/Tyr_kinase_cat_dom"/>
</dbReference>
<dbReference type="InterPro" id="IPR008271">
    <property type="entry name" value="Ser/Thr_kinase_AS"/>
</dbReference>
<dbReference type="InterPro" id="IPR053235">
    <property type="entry name" value="Ser_Thr_kinase"/>
</dbReference>
<dbReference type="InterPro" id="IPR036028">
    <property type="entry name" value="SH3-like_dom_sf"/>
</dbReference>
<dbReference type="InterPro" id="IPR001452">
    <property type="entry name" value="SH3_domain"/>
</dbReference>
<dbReference type="PANTHER" id="PTHR24361">
    <property type="entry name" value="MITOGEN-ACTIVATED KINASE KINASE KINASE"/>
    <property type="match status" value="1"/>
</dbReference>
<dbReference type="PANTHER" id="PTHR24361:SF492">
    <property type="entry name" value="SERINE_THREONINE-PROTEIN KINASE MKCF-RELATED"/>
    <property type="match status" value="1"/>
</dbReference>
<dbReference type="Pfam" id="PF00069">
    <property type="entry name" value="Pkinase"/>
    <property type="match status" value="1"/>
</dbReference>
<dbReference type="Pfam" id="PF07653">
    <property type="entry name" value="SH3_2"/>
    <property type="match status" value="1"/>
</dbReference>
<dbReference type="PRINTS" id="PR00109">
    <property type="entry name" value="TYRKINASE"/>
</dbReference>
<dbReference type="SMART" id="SM00220">
    <property type="entry name" value="S_TKc"/>
    <property type="match status" value="1"/>
</dbReference>
<dbReference type="SMART" id="SM00326">
    <property type="entry name" value="SH3"/>
    <property type="match status" value="1"/>
</dbReference>
<dbReference type="SUPFAM" id="SSF56112">
    <property type="entry name" value="Protein kinase-like (PK-like)"/>
    <property type="match status" value="1"/>
</dbReference>
<dbReference type="SUPFAM" id="SSF50044">
    <property type="entry name" value="SH3-domain"/>
    <property type="match status" value="1"/>
</dbReference>
<dbReference type="PROSITE" id="PS50011">
    <property type="entry name" value="PROTEIN_KINASE_DOM"/>
    <property type="match status" value="1"/>
</dbReference>
<dbReference type="PROSITE" id="PS00108">
    <property type="entry name" value="PROTEIN_KINASE_ST"/>
    <property type="match status" value="1"/>
</dbReference>
<dbReference type="PROSITE" id="PS50002">
    <property type="entry name" value="SH3"/>
    <property type="match status" value="1"/>
</dbReference>
<keyword id="KW-0067">ATP-binding</keyword>
<keyword id="KW-0418">Kinase</keyword>
<keyword id="KW-0460">Magnesium</keyword>
<keyword id="KW-0479">Metal-binding</keyword>
<keyword id="KW-0547">Nucleotide-binding</keyword>
<keyword id="KW-1185">Reference proteome</keyword>
<keyword id="KW-0723">Serine/threonine-protein kinase</keyword>
<keyword id="KW-0728">SH3 domain</keyword>
<keyword id="KW-0808">Transferase</keyword>
<comment type="catalytic activity">
    <reaction evidence="2">
        <text>L-seryl-[protein] + ATP = O-phospho-L-seryl-[protein] + ADP + H(+)</text>
        <dbReference type="Rhea" id="RHEA:17989"/>
        <dbReference type="Rhea" id="RHEA-COMP:9863"/>
        <dbReference type="Rhea" id="RHEA-COMP:11604"/>
        <dbReference type="ChEBI" id="CHEBI:15378"/>
        <dbReference type="ChEBI" id="CHEBI:29999"/>
        <dbReference type="ChEBI" id="CHEBI:30616"/>
        <dbReference type="ChEBI" id="CHEBI:83421"/>
        <dbReference type="ChEBI" id="CHEBI:456216"/>
        <dbReference type="EC" id="2.7.11.1"/>
    </reaction>
</comment>
<comment type="catalytic activity">
    <reaction evidence="2">
        <text>L-threonyl-[protein] + ATP = O-phospho-L-threonyl-[protein] + ADP + H(+)</text>
        <dbReference type="Rhea" id="RHEA:46608"/>
        <dbReference type="Rhea" id="RHEA-COMP:11060"/>
        <dbReference type="Rhea" id="RHEA-COMP:11605"/>
        <dbReference type="ChEBI" id="CHEBI:15378"/>
        <dbReference type="ChEBI" id="CHEBI:30013"/>
        <dbReference type="ChEBI" id="CHEBI:30616"/>
        <dbReference type="ChEBI" id="CHEBI:61977"/>
        <dbReference type="ChEBI" id="CHEBI:456216"/>
        <dbReference type="EC" id="2.7.11.1"/>
    </reaction>
</comment>
<comment type="cofactor">
    <cofactor evidence="2">
        <name>Mg(2+)</name>
        <dbReference type="ChEBI" id="CHEBI:18420"/>
    </cofactor>
</comment>
<comment type="similarity">
    <text evidence="3">Belongs to the protein kinase superfamily. Ser/Thr protein kinase family. STE20 subfamily.</text>
</comment>
<accession>Q55CE0</accession>
<feature type="chain" id="PRO_0000381744" description="Probable serine/threonine-protein kinase mkcF">
    <location>
        <begin position="1"/>
        <end position="677"/>
    </location>
</feature>
<feature type="domain" description="SH3" evidence="4">
    <location>
        <begin position="1"/>
        <end position="58"/>
    </location>
</feature>
<feature type="domain" description="Protein kinase" evidence="3">
    <location>
        <begin position="401"/>
        <end position="646"/>
    </location>
</feature>
<feature type="region of interest" description="Disordered" evidence="6">
    <location>
        <begin position="72"/>
        <end position="244"/>
    </location>
</feature>
<feature type="compositionally biased region" description="Low complexity" evidence="6">
    <location>
        <begin position="79"/>
        <end position="94"/>
    </location>
</feature>
<feature type="compositionally biased region" description="Polar residues" evidence="6">
    <location>
        <begin position="105"/>
        <end position="126"/>
    </location>
</feature>
<feature type="compositionally biased region" description="Low complexity" evidence="6">
    <location>
        <begin position="127"/>
        <end position="146"/>
    </location>
</feature>
<feature type="compositionally biased region" description="Polar residues" evidence="6">
    <location>
        <begin position="158"/>
        <end position="174"/>
    </location>
</feature>
<feature type="compositionally biased region" description="Low complexity" evidence="6">
    <location>
        <begin position="175"/>
        <end position="192"/>
    </location>
</feature>
<feature type="compositionally biased region" description="Basic and acidic residues" evidence="6">
    <location>
        <begin position="209"/>
        <end position="224"/>
    </location>
</feature>
<feature type="compositionally biased region" description="Low complexity" evidence="6">
    <location>
        <begin position="230"/>
        <end position="240"/>
    </location>
</feature>
<feature type="active site" description="Proton acceptor" evidence="1 3 5">
    <location>
        <position position="519"/>
    </location>
</feature>
<feature type="binding site" evidence="1 3">
    <location>
        <begin position="407"/>
        <end position="415"/>
    </location>
    <ligand>
        <name>ATP</name>
        <dbReference type="ChEBI" id="CHEBI:30616"/>
    </ligand>
</feature>
<feature type="binding site" evidence="1 3">
    <location>
        <position position="428"/>
    </location>
    <ligand>
        <name>ATP</name>
        <dbReference type="ChEBI" id="CHEBI:30616"/>
    </ligand>
</feature>
<protein>
    <recommendedName>
        <fullName evidence="7">Probable serine/threonine-protein kinase mkcF</fullName>
        <ecNumber>2.7.11.1</ecNumber>
    </recommendedName>
    <alternativeName>
        <fullName>MAP kinase cascade F</fullName>
    </alternativeName>
</protein>
<proteinExistence type="inferred from homology"/>